<feature type="chain" id="PRO_0000363607" description="Probable protein S-acyltransferase 6">
    <location>
        <begin position="1"/>
        <end position="410"/>
    </location>
</feature>
<feature type="transmembrane region" description="Helical" evidence="3">
    <location>
        <begin position="45"/>
        <end position="65"/>
    </location>
</feature>
<feature type="transmembrane region" description="Helical" evidence="3">
    <location>
        <begin position="76"/>
        <end position="96"/>
    </location>
</feature>
<feature type="transmembrane region" description="Helical" evidence="3">
    <location>
        <begin position="191"/>
        <end position="211"/>
    </location>
</feature>
<feature type="transmembrane region" description="Helical" evidence="3">
    <location>
        <begin position="235"/>
        <end position="255"/>
    </location>
</feature>
<feature type="domain" description="DHHC" evidence="4">
    <location>
        <begin position="147"/>
        <end position="197"/>
    </location>
</feature>
<feature type="region of interest" description="Disordered" evidence="5">
    <location>
        <begin position="108"/>
        <end position="129"/>
    </location>
</feature>
<feature type="active site" description="S-palmitoyl cysteine intermediate" evidence="1">
    <location>
        <position position="177"/>
    </location>
</feature>
<feature type="modified residue" description="Phosphoserine" evidence="2">
    <location>
        <position position="325"/>
    </location>
</feature>
<gene>
    <name type="primary">PAT06</name>
    <name type="ordered locus">At5g41060</name>
    <name type="ORF">MEE6.13</name>
</gene>
<name>ZDH23_ARATH</name>
<protein>
    <recommendedName>
        <fullName>Probable protein S-acyltransferase 6</fullName>
        <ecNumber>2.3.1.225</ecNumber>
    </recommendedName>
    <alternativeName>
        <fullName>Probable palmitoyltransferase At5g41060</fullName>
    </alternativeName>
    <alternativeName>
        <fullName>Zinc finger DHHC domain-containing protein At5g41060</fullName>
    </alternativeName>
</protein>
<dbReference type="EC" id="2.3.1.225"/>
<dbReference type="EMBL" id="AB010072">
    <property type="protein sequence ID" value="BAB09708.1"/>
    <property type="molecule type" value="Genomic_DNA"/>
</dbReference>
<dbReference type="EMBL" id="CP002688">
    <property type="protein sequence ID" value="AED94631.1"/>
    <property type="molecule type" value="Genomic_DNA"/>
</dbReference>
<dbReference type="EMBL" id="AY045978">
    <property type="protein sequence ID" value="AAK76652.1"/>
    <property type="molecule type" value="mRNA"/>
</dbReference>
<dbReference type="EMBL" id="AY079326">
    <property type="protein sequence ID" value="AAL85057.1"/>
    <property type="molecule type" value="mRNA"/>
</dbReference>
<dbReference type="RefSeq" id="NP_198922.1">
    <molecule id="Q9FLM3-1"/>
    <property type="nucleotide sequence ID" value="NM_123471.4"/>
</dbReference>
<dbReference type="SMR" id="Q9FLM3"/>
<dbReference type="FunCoup" id="Q9FLM3">
    <property type="interactions" value="2363"/>
</dbReference>
<dbReference type="STRING" id="3702.Q9FLM3"/>
<dbReference type="iPTMnet" id="Q9FLM3"/>
<dbReference type="PaxDb" id="3702-AT5G41060.1"/>
<dbReference type="ProteomicsDB" id="242946">
    <molecule id="Q9FLM3-1"/>
</dbReference>
<dbReference type="EnsemblPlants" id="AT5G41060.1">
    <molecule id="Q9FLM3-1"/>
    <property type="protein sequence ID" value="AT5G41060.1"/>
    <property type="gene ID" value="AT5G41060"/>
</dbReference>
<dbReference type="GeneID" id="834108"/>
<dbReference type="Gramene" id="AT5G41060.1">
    <molecule id="Q9FLM3-1"/>
    <property type="protein sequence ID" value="AT5G41060.1"/>
    <property type="gene ID" value="AT5G41060"/>
</dbReference>
<dbReference type="KEGG" id="ath:AT5G41060"/>
<dbReference type="Araport" id="AT5G41060"/>
<dbReference type="TAIR" id="AT5G41060"/>
<dbReference type="eggNOG" id="KOG1311">
    <property type="taxonomic scope" value="Eukaryota"/>
</dbReference>
<dbReference type="HOGENOM" id="CLU_018741_2_2_1"/>
<dbReference type="InParanoid" id="Q9FLM3"/>
<dbReference type="OMA" id="GTAESHW"/>
<dbReference type="OrthoDB" id="4096362at2759"/>
<dbReference type="PhylomeDB" id="Q9FLM3"/>
<dbReference type="BRENDA" id="2.3.1.225">
    <property type="organism ID" value="399"/>
</dbReference>
<dbReference type="PRO" id="PR:Q9FLM3"/>
<dbReference type="Proteomes" id="UP000006548">
    <property type="component" value="Chromosome 5"/>
</dbReference>
<dbReference type="ExpressionAtlas" id="Q9FLM3">
    <property type="expression patterns" value="baseline and differential"/>
</dbReference>
<dbReference type="GO" id="GO:0005886">
    <property type="term" value="C:plasma membrane"/>
    <property type="evidence" value="ECO:0007669"/>
    <property type="project" value="UniProtKB-SubCell"/>
</dbReference>
<dbReference type="GO" id="GO:0019706">
    <property type="term" value="F:protein-cysteine S-palmitoyltransferase activity"/>
    <property type="evidence" value="ECO:0007669"/>
    <property type="project" value="UniProtKB-EC"/>
</dbReference>
<dbReference type="InterPro" id="IPR001594">
    <property type="entry name" value="Palmitoyltrfase_DHHC"/>
</dbReference>
<dbReference type="InterPro" id="IPR039859">
    <property type="entry name" value="PFA4/ZDH16/20/ERF2-like"/>
</dbReference>
<dbReference type="PANTHER" id="PTHR22883:SF43">
    <property type="entry name" value="PALMITOYLTRANSFERASE APP"/>
    <property type="match status" value="1"/>
</dbReference>
<dbReference type="PANTHER" id="PTHR22883">
    <property type="entry name" value="ZINC FINGER DHHC DOMAIN CONTAINING PROTEIN"/>
    <property type="match status" value="1"/>
</dbReference>
<dbReference type="Pfam" id="PF01529">
    <property type="entry name" value="DHHC"/>
    <property type="match status" value="1"/>
</dbReference>
<dbReference type="PROSITE" id="PS50216">
    <property type="entry name" value="DHHC"/>
    <property type="match status" value="1"/>
</dbReference>
<evidence type="ECO:0000250" key="1"/>
<evidence type="ECO:0000250" key="2">
    <source>
        <dbReference type="UniProtKB" id="Q0WQK2"/>
    </source>
</evidence>
<evidence type="ECO:0000255" key="3"/>
<evidence type="ECO:0000255" key="4">
    <source>
        <dbReference type="PROSITE-ProRule" id="PRU00067"/>
    </source>
</evidence>
<evidence type="ECO:0000256" key="5">
    <source>
        <dbReference type="SAM" id="MobiDB-lite"/>
    </source>
</evidence>
<evidence type="ECO:0000269" key="6">
    <source ref="4"/>
</evidence>
<evidence type="ECO:0000305" key="7"/>
<comment type="function">
    <text evidence="1 6">Palmitoyl acyltransferase.</text>
</comment>
<comment type="catalytic activity">
    <reaction>
        <text>L-cysteinyl-[protein] + hexadecanoyl-CoA = S-hexadecanoyl-L-cysteinyl-[protein] + CoA</text>
        <dbReference type="Rhea" id="RHEA:36683"/>
        <dbReference type="Rhea" id="RHEA-COMP:10131"/>
        <dbReference type="Rhea" id="RHEA-COMP:11032"/>
        <dbReference type="ChEBI" id="CHEBI:29950"/>
        <dbReference type="ChEBI" id="CHEBI:57287"/>
        <dbReference type="ChEBI" id="CHEBI:57379"/>
        <dbReference type="ChEBI" id="CHEBI:74151"/>
        <dbReference type="EC" id="2.3.1.225"/>
    </reaction>
</comment>
<comment type="subcellular location">
    <subcellularLocation>
        <location evidence="7">Cell membrane</location>
        <topology evidence="7">Multi-pass membrane protein</topology>
    </subcellularLocation>
</comment>
<comment type="alternative products">
    <event type="alternative splicing"/>
    <isoform>
        <id>Q9FLM3-1</id>
        <name>1</name>
        <sequence type="displayed"/>
    </isoform>
    <text>A number of isoforms are produced. According to EST sequences.</text>
</comment>
<comment type="domain">
    <text evidence="1">The DHHC domain is required for palmitoyltransferase activity.</text>
</comment>
<comment type="similarity">
    <text evidence="7">Belongs to the DHHC palmitoyltransferase family.</text>
</comment>
<proteinExistence type="evidence at transcript level"/>
<organism>
    <name type="scientific">Arabidopsis thaliana</name>
    <name type="common">Mouse-ear cress</name>
    <dbReference type="NCBI Taxonomy" id="3702"/>
    <lineage>
        <taxon>Eukaryota</taxon>
        <taxon>Viridiplantae</taxon>
        <taxon>Streptophyta</taxon>
        <taxon>Embryophyta</taxon>
        <taxon>Tracheophyta</taxon>
        <taxon>Spermatophyta</taxon>
        <taxon>Magnoliopsida</taxon>
        <taxon>eudicotyledons</taxon>
        <taxon>Gunneridae</taxon>
        <taxon>Pentapetalae</taxon>
        <taxon>rosids</taxon>
        <taxon>malvids</taxon>
        <taxon>Brassicales</taxon>
        <taxon>Brassicaceae</taxon>
        <taxon>Camelineae</taxon>
        <taxon>Arabidopsis</taxon>
    </lineage>
</organism>
<sequence>MYVVTPPQRSGFGSDCDLRVYQTWKGSNIFCLQGRFIFGPDVRSLGLTISLIVAPVTIFCIFVASKLMDDFSDSWGVSIILVAVVFTIYDLILLMLTSGRDPGIIPRNSHPPEPEVVDGNTGSGTSQTPRLPRVKEVEVNGKVFKVKYCDTCMLYRPPRCSHCSICNNCVERFDHHCPWVGQCIAQRNYRFFFMFVFSTTLLCVYVFAFCCVYIKKIKESEDISILKAMLKTPASIALILYTFISTFFVGGLTCFHLYLISTNQTTYENFRYSYDRHSNPHNKGVVDNFKEIFFSPIPPSKNNFRAMVPRENPMPSRSVVGGFMSPNMGKANDDIEMGRKGVWAMAEHGDGKDGNNNERFHVNDNELNELSPDMGNIVNGDEQINRPNNHPRNANWEMSPEVMALSARRA</sequence>
<accession>Q9FLM3</accession>
<keyword id="KW-0012">Acyltransferase</keyword>
<keyword id="KW-0025">Alternative splicing</keyword>
<keyword id="KW-1003">Cell membrane</keyword>
<keyword id="KW-0449">Lipoprotein</keyword>
<keyword id="KW-0472">Membrane</keyword>
<keyword id="KW-0564">Palmitate</keyword>
<keyword id="KW-0597">Phosphoprotein</keyword>
<keyword id="KW-1185">Reference proteome</keyword>
<keyword id="KW-0808">Transferase</keyword>
<keyword id="KW-0812">Transmembrane</keyword>
<keyword id="KW-1133">Transmembrane helix</keyword>
<reference key="1">
    <citation type="journal article" date="1998" name="DNA Res.">
        <title>Structural analysis of Arabidopsis thaliana chromosome 5. IV. Sequence features of the regions of 1,456,315 bp covered by nineteen physically assigned P1 and TAC clones.</title>
        <authorList>
            <person name="Sato S."/>
            <person name="Kaneko T."/>
            <person name="Kotani H."/>
            <person name="Nakamura Y."/>
            <person name="Asamizu E."/>
            <person name="Miyajima N."/>
            <person name="Tabata S."/>
        </authorList>
    </citation>
    <scope>NUCLEOTIDE SEQUENCE [LARGE SCALE GENOMIC DNA]</scope>
    <source>
        <strain>cv. Columbia</strain>
    </source>
</reference>
<reference key="2">
    <citation type="journal article" date="2017" name="Plant J.">
        <title>Araport11: a complete reannotation of the Arabidopsis thaliana reference genome.</title>
        <authorList>
            <person name="Cheng C.Y."/>
            <person name="Krishnakumar V."/>
            <person name="Chan A.P."/>
            <person name="Thibaud-Nissen F."/>
            <person name="Schobel S."/>
            <person name="Town C.D."/>
        </authorList>
    </citation>
    <scope>GENOME REANNOTATION</scope>
    <source>
        <strain>cv. Columbia</strain>
    </source>
</reference>
<reference key="3">
    <citation type="journal article" date="2003" name="Science">
        <title>Empirical analysis of transcriptional activity in the Arabidopsis genome.</title>
        <authorList>
            <person name="Yamada K."/>
            <person name="Lim J."/>
            <person name="Dale J.M."/>
            <person name="Chen H."/>
            <person name="Shinn P."/>
            <person name="Palm C.J."/>
            <person name="Southwick A.M."/>
            <person name="Wu H.C."/>
            <person name="Kim C.J."/>
            <person name="Nguyen M."/>
            <person name="Pham P.K."/>
            <person name="Cheuk R.F."/>
            <person name="Karlin-Newmann G."/>
            <person name="Liu S.X."/>
            <person name="Lam B."/>
            <person name="Sakano H."/>
            <person name="Wu T."/>
            <person name="Yu G."/>
            <person name="Miranda M."/>
            <person name="Quach H.L."/>
            <person name="Tripp M."/>
            <person name="Chang C.H."/>
            <person name="Lee J.M."/>
            <person name="Toriumi M.J."/>
            <person name="Chan M.M."/>
            <person name="Tang C.C."/>
            <person name="Onodera C.S."/>
            <person name="Deng J.M."/>
            <person name="Akiyama K."/>
            <person name="Ansari Y."/>
            <person name="Arakawa T."/>
            <person name="Banh J."/>
            <person name="Banno F."/>
            <person name="Bowser L."/>
            <person name="Brooks S.Y."/>
            <person name="Carninci P."/>
            <person name="Chao Q."/>
            <person name="Choy N."/>
            <person name="Enju A."/>
            <person name="Goldsmith A.D."/>
            <person name="Gurjal M."/>
            <person name="Hansen N.F."/>
            <person name="Hayashizaki Y."/>
            <person name="Johnson-Hopson C."/>
            <person name="Hsuan V.W."/>
            <person name="Iida K."/>
            <person name="Karnes M."/>
            <person name="Khan S."/>
            <person name="Koesema E."/>
            <person name="Ishida J."/>
            <person name="Jiang P.X."/>
            <person name="Jones T."/>
            <person name="Kawai J."/>
            <person name="Kamiya A."/>
            <person name="Meyers C."/>
            <person name="Nakajima M."/>
            <person name="Narusaka M."/>
            <person name="Seki M."/>
            <person name="Sakurai T."/>
            <person name="Satou M."/>
            <person name="Tamse R."/>
            <person name="Vaysberg M."/>
            <person name="Wallender E.K."/>
            <person name="Wong C."/>
            <person name="Yamamura Y."/>
            <person name="Yuan S."/>
            <person name="Shinozaki K."/>
            <person name="Davis R.W."/>
            <person name="Theologis A."/>
            <person name="Ecker J.R."/>
        </authorList>
    </citation>
    <scope>NUCLEOTIDE SEQUENCE [LARGE SCALE MRNA]</scope>
    <source>
        <strain>cv. Columbia</strain>
    </source>
</reference>
<reference key="4">
    <citation type="book" date="2007" name="Proceedings of the 18th international conference on Arabidopsis research">
        <title>S-acylation: dynamic control of plant development and sigalling by lipid modification of proteins.</title>
        <authorList>
            <person name="Hemsley P.A."/>
            <person name="Taylor L."/>
            <person name="Grierson C.S."/>
        </authorList>
    </citation>
    <scope>GENE FAMILY</scope>
    <scope>FUNCTION</scope>
</reference>
<reference key="5">
    <citation type="journal article" date="2012" name="Plant Physiol.">
        <title>Genomics and localization of the Arabidopsis DHHC-cysteine-rich domain S-acyltransferase protein family.</title>
        <authorList>
            <person name="Batistic O."/>
        </authorList>
    </citation>
    <scope>SUBCELLULAR LOCATION</scope>
    <scope>GENE FAMILY</scope>
    <scope>NOMENCLATURE</scope>
</reference>